<comment type="catalytic activity">
    <reaction evidence="2">
        <text>tRNA(Trp) + L-tryptophan + ATP = L-tryptophyl-tRNA(Trp) + AMP + diphosphate + H(+)</text>
        <dbReference type="Rhea" id="RHEA:24080"/>
        <dbReference type="Rhea" id="RHEA-COMP:9671"/>
        <dbReference type="Rhea" id="RHEA-COMP:9705"/>
        <dbReference type="ChEBI" id="CHEBI:15378"/>
        <dbReference type="ChEBI" id="CHEBI:30616"/>
        <dbReference type="ChEBI" id="CHEBI:33019"/>
        <dbReference type="ChEBI" id="CHEBI:57912"/>
        <dbReference type="ChEBI" id="CHEBI:78442"/>
        <dbReference type="ChEBI" id="CHEBI:78535"/>
        <dbReference type="ChEBI" id="CHEBI:456215"/>
        <dbReference type="EC" id="6.1.1.2"/>
    </reaction>
    <physiologicalReaction direction="left-to-right" evidence="4">
        <dbReference type="Rhea" id="RHEA:24081"/>
    </physiologicalReaction>
</comment>
<comment type="subunit">
    <text>Homodimer.</text>
</comment>
<comment type="subcellular location">
    <subcellularLocation>
        <location>Cytoplasm</location>
    </subcellularLocation>
</comment>
<comment type="miscellaneous">
    <text evidence="1">Present with 12100 molecules/cell in log phase SD medium.</text>
</comment>
<comment type="similarity">
    <text evidence="3">Belongs to the class-I aminoacyl-tRNA synthetase family.</text>
</comment>
<keyword id="KW-0002">3D-structure</keyword>
<keyword id="KW-0030">Aminoacyl-tRNA synthetase</keyword>
<keyword id="KW-0067">ATP-binding</keyword>
<keyword id="KW-0963">Cytoplasm</keyword>
<keyword id="KW-0436">Ligase</keyword>
<keyword id="KW-0547">Nucleotide-binding</keyword>
<keyword id="KW-0648">Protein biosynthesis</keyword>
<keyword id="KW-1185">Reference proteome</keyword>
<organism>
    <name type="scientific">Saccharomyces cerevisiae (strain ATCC 204508 / S288c)</name>
    <name type="common">Baker's yeast</name>
    <dbReference type="NCBI Taxonomy" id="559292"/>
    <lineage>
        <taxon>Eukaryota</taxon>
        <taxon>Fungi</taxon>
        <taxon>Dikarya</taxon>
        <taxon>Ascomycota</taxon>
        <taxon>Saccharomycotina</taxon>
        <taxon>Saccharomycetes</taxon>
        <taxon>Saccharomycetales</taxon>
        <taxon>Saccharomycetaceae</taxon>
        <taxon>Saccharomyces</taxon>
    </lineage>
</organism>
<reference key="1">
    <citation type="journal article" date="1995" name="Yeast">
        <title>Sequence analysis of a 44 kb DNA fragment of yeast chromosome XV including the Ty1-H3 retrotransposon, the suf1(+) frameshift suppressor gene for tRNA-Gly, the yeast transfer RNA-Thr-1a and a delta element.</title>
        <authorList>
            <person name="Vandenbol M."/>
            <person name="Durand P."/>
            <person name="Portetelle D."/>
            <person name="Hilger F."/>
        </authorList>
    </citation>
    <scope>NUCLEOTIDE SEQUENCE [GENOMIC DNA]</scope>
</reference>
<reference key="2">
    <citation type="journal article" date="1997" name="Nature">
        <title>The nucleotide sequence of Saccharomyces cerevisiae chromosome XV.</title>
        <authorList>
            <person name="Dujon B."/>
            <person name="Albermann K."/>
            <person name="Aldea M."/>
            <person name="Alexandraki D."/>
            <person name="Ansorge W."/>
            <person name="Arino J."/>
            <person name="Benes V."/>
            <person name="Bohn C."/>
            <person name="Bolotin-Fukuhara M."/>
            <person name="Bordonne R."/>
            <person name="Boyer J."/>
            <person name="Camasses A."/>
            <person name="Casamayor A."/>
            <person name="Casas C."/>
            <person name="Cheret G."/>
            <person name="Cziepluch C."/>
            <person name="Daignan-Fornier B."/>
            <person name="Dang V.-D."/>
            <person name="de Haan M."/>
            <person name="Delius H."/>
            <person name="Durand P."/>
            <person name="Fairhead C."/>
            <person name="Feldmann H."/>
            <person name="Gaillon L."/>
            <person name="Galisson F."/>
            <person name="Gamo F.-J."/>
            <person name="Gancedo C."/>
            <person name="Goffeau A."/>
            <person name="Goulding S.E."/>
            <person name="Grivell L.A."/>
            <person name="Habbig B."/>
            <person name="Hand N.J."/>
            <person name="Hani J."/>
            <person name="Hattenhorst U."/>
            <person name="Hebling U."/>
            <person name="Hernando Y."/>
            <person name="Herrero E."/>
            <person name="Heumann K."/>
            <person name="Hiesel R."/>
            <person name="Hilger F."/>
            <person name="Hofmann B."/>
            <person name="Hollenberg C.P."/>
            <person name="Hughes B."/>
            <person name="Jauniaux J.-C."/>
            <person name="Kalogeropoulos A."/>
            <person name="Katsoulou C."/>
            <person name="Kordes E."/>
            <person name="Lafuente M.J."/>
            <person name="Landt O."/>
            <person name="Louis E.J."/>
            <person name="Maarse A.C."/>
            <person name="Madania A."/>
            <person name="Mannhaupt G."/>
            <person name="Marck C."/>
            <person name="Martin R.P."/>
            <person name="Mewes H.-W."/>
            <person name="Michaux G."/>
            <person name="Paces V."/>
            <person name="Parle-McDermott A.G."/>
            <person name="Pearson B.M."/>
            <person name="Perrin A."/>
            <person name="Pettersson B."/>
            <person name="Poch O."/>
            <person name="Pohl T.M."/>
            <person name="Poirey R."/>
            <person name="Portetelle D."/>
            <person name="Pujol A."/>
            <person name="Purnelle B."/>
            <person name="Ramezani Rad M."/>
            <person name="Rechmann S."/>
            <person name="Schwager C."/>
            <person name="Schweizer M."/>
            <person name="Sor F."/>
            <person name="Sterky F."/>
            <person name="Tarassov I.A."/>
            <person name="Teodoru C."/>
            <person name="Tettelin H."/>
            <person name="Thierry A."/>
            <person name="Tobiasch E."/>
            <person name="Tzermia M."/>
            <person name="Uhlen M."/>
            <person name="Unseld M."/>
            <person name="Valens M."/>
            <person name="Vandenbol M."/>
            <person name="Vetter I."/>
            <person name="Vlcek C."/>
            <person name="Voet M."/>
            <person name="Volckaert G."/>
            <person name="Voss H."/>
            <person name="Wambutt R."/>
            <person name="Wedler H."/>
            <person name="Wiemann S."/>
            <person name="Winsor B."/>
            <person name="Wolfe K.H."/>
            <person name="Zollner A."/>
            <person name="Zumstein E."/>
            <person name="Kleine K."/>
        </authorList>
    </citation>
    <scope>NUCLEOTIDE SEQUENCE [LARGE SCALE GENOMIC DNA]</scope>
    <source>
        <strain>ATCC 204508 / S288c</strain>
    </source>
</reference>
<reference key="3">
    <citation type="journal article" date="2014" name="G3 (Bethesda)">
        <title>The reference genome sequence of Saccharomyces cerevisiae: Then and now.</title>
        <authorList>
            <person name="Engel S.R."/>
            <person name="Dietrich F.S."/>
            <person name="Fisk D.G."/>
            <person name="Binkley G."/>
            <person name="Balakrishnan R."/>
            <person name="Costanzo M.C."/>
            <person name="Dwight S.S."/>
            <person name="Hitz B.C."/>
            <person name="Karra K."/>
            <person name="Nash R.S."/>
            <person name="Weng S."/>
            <person name="Wong E.D."/>
            <person name="Lloyd P."/>
            <person name="Skrzypek M.S."/>
            <person name="Miyasato S.R."/>
            <person name="Simison M."/>
            <person name="Cherry J.M."/>
        </authorList>
    </citation>
    <scope>GENOME REANNOTATION</scope>
    <source>
        <strain>ATCC 204508 / S288c</strain>
    </source>
</reference>
<reference key="4">
    <citation type="journal article" date="2007" name="Genome Res.">
        <title>Approaching a complete repository of sequence-verified protein-encoding clones for Saccharomyces cerevisiae.</title>
        <authorList>
            <person name="Hu Y."/>
            <person name="Rolfs A."/>
            <person name="Bhullar B."/>
            <person name="Murthy T.V.S."/>
            <person name="Zhu C."/>
            <person name="Berger M.F."/>
            <person name="Camargo A.A."/>
            <person name="Kelley F."/>
            <person name="McCarron S."/>
            <person name="Jepson D."/>
            <person name="Richardson A."/>
            <person name="Raphael J."/>
            <person name="Moreira D."/>
            <person name="Taycher E."/>
            <person name="Zuo D."/>
            <person name="Mohr S."/>
            <person name="Kane M.F."/>
            <person name="Williamson J."/>
            <person name="Simpson A.J.G."/>
            <person name="Bulyk M.L."/>
            <person name="Harlow E."/>
            <person name="Marsischky G."/>
            <person name="Kolodner R.D."/>
            <person name="LaBaer J."/>
        </authorList>
    </citation>
    <scope>NUCLEOTIDE SEQUENCE [GENOMIC DNA]</scope>
    <source>
        <strain>ATCC 204508 / S288c</strain>
    </source>
</reference>
<reference key="5">
    <citation type="journal article" date="1997" name="Yeast">
        <title>Identification and expression of the Saccharomyces cerevisiae cytoplasmic tryptophanyl-tRNA synthetase gene.</title>
        <authorList>
            <person name="John T.R."/>
            <person name="Ghosh M."/>
            <person name="Johnson J.D."/>
        </authorList>
    </citation>
    <scope>FUNCTION</scope>
    <scope>CATALYTIC ACTIVITY</scope>
</reference>
<reference key="6">
    <citation type="journal article" date="2003" name="Nature">
        <title>Global analysis of protein expression in yeast.</title>
        <authorList>
            <person name="Ghaemmaghami S."/>
            <person name="Huh W.-K."/>
            <person name="Bower K."/>
            <person name="Howson R.W."/>
            <person name="Belle A."/>
            <person name="Dephoure N."/>
            <person name="O'Shea E.K."/>
            <person name="Weissman J.S."/>
        </authorList>
    </citation>
    <scope>LEVEL OF PROTEIN EXPRESSION [LARGE SCALE ANALYSIS]</scope>
</reference>
<reference key="7">
    <citation type="journal article" date="2008" name="Mol. Cell. Proteomics">
        <title>A multidimensional chromatography technology for in-depth phosphoproteome analysis.</title>
        <authorList>
            <person name="Albuquerque C.P."/>
            <person name="Smolka M.B."/>
            <person name="Payne S.H."/>
            <person name="Bafna V."/>
            <person name="Eng J."/>
            <person name="Zhou H."/>
        </authorList>
    </citation>
    <scope>IDENTIFICATION BY MASS SPECTROMETRY [LARGE SCALE ANALYSIS]</scope>
</reference>
<proteinExistence type="evidence at protein level"/>
<gene>
    <name type="primary">WRS1</name>
    <name type="ordered locus">YOL097C</name>
    <name type="ORF">HRE432</name>
</gene>
<evidence type="ECO:0000269" key="1">
    <source>
    </source>
</evidence>
<evidence type="ECO:0000269" key="2">
    <source>
    </source>
</evidence>
<evidence type="ECO:0000305" key="3"/>
<evidence type="ECO:0000305" key="4">
    <source>
    </source>
</evidence>
<evidence type="ECO:0007829" key="5">
    <source>
        <dbReference type="PDB" id="2IP1"/>
    </source>
</evidence>
<evidence type="ECO:0007829" key="6">
    <source>
        <dbReference type="PDB" id="3KT3"/>
    </source>
</evidence>
<evidence type="ECO:0007829" key="7">
    <source>
        <dbReference type="PDB" id="3KT6"/>
    </source>
</evidence>
<sequence>MSNDETVEKVTQQVSELKSTDVKEQVVTPWDVEGGVDEQGRAQNIDYDKLIKQFGTKPVNEETLKRFKQVTGREPHHFLRKGLFFSERDFTKILDLYEQGKPFFLYTGRGPSSDSMHLGHMIPFVFTKWLQEVFDVPLVIELTDDEKFLFKHKLTINDVKNFARENAKDIIAVGFDPKNTFIFSDLQYMGGAFYETVVRVSRQITGSTAKAVFGFNDSDCIGKFHFASIQIATAFPSSFPNVLGLPDKTPCLIPCAIDQDPYFRVCRDVADKLKYSKPALLHSRFFPALQGSTTKMSASDDTTAIFMTDTPKQIQKKINKYAFSGGQVSADLHRELGGNPDVDVAYQYLSFFKDDDVFLKECYDKYKSGELLSGEMKKLCIETLQEFVKAFQERRAQVDEETLDKFMVPHKLVWGEKERLVAPKPKTKQEKK</sequence>
<accession>Q12109</accession>
<accession>D6W1X1</accession>
<accession>E9P8Z9</accession>
<protein>
    <recommendedName>
        <fullName>Tryptophan--tRNA ligase, cytoplasmic</fullName>
        <ecNumber evidence="2">6.1.1.2</ecNumber>
    </recommendedName>
    <alternativeName>
        <fullName>Tryptophanyl-tRNA synthetase</fullName>
        <shortName>TrpRS</shortName>
    </alternativeName>
</protein>
<name>SYWC_YEAST</name>
<feature type="chain" id="PRO_0000136744" description="Tryptophan--tRNA ligase, cytoplasmic">
    <location>
        <begin position="1"/>
        <end position="432"/>
    </location>
</feature>
<feature type="short sequence motif" description="'HIGH' region">
    <location>
        <begin position="111"/>
        <end position="120"/>
    </location>
</feature>
<feature type="short sequence motif" description="'KMSKS' region">
    <location>
        <begin position="295"/>
        <end position="299"/>
    </location>
</feature>
<feature type="sequence conflict" description="In Ref. 4; AAT92967." evidence="3" ref="4">
    <original>E</original>
    <variation>G</variation>
    <location>
        <position position="87"/>
    </location>
</feature>
<feature type="helix" evidence="5">
    <location>
        <begin position="47"/>
        <end position="54"/>
    </location>
</feature>
<feature type="helix" evidence="5">
    <location>
        <begin position="61"/>
        <end position="71"/>
    </location>
</feature>
<feature type="helix" evidence="5">
    <location>
        <begin position="77"/>
        <end position="80"/>
    </location>
</feature>
<feature type="strand" evidence="5">
    <location>
        <begin position="83"/>
        <end position="89"/>
    </location>
</feature>
<feature type="helix" evidence="5">
    <location>
        <begin position="90"/>
        <end position="99"/>
    </location>
</feature>
<feature type="strand" evidence="5">
    <location>
        <begin position="104"/>
        <end position="109"/>
    </location>
</feature>
<feature type="strand" evidence="6">
    <location>
        <begin position="112"/>
        <end position="114"/>
    </location>
</feature>
<feature type="helix" evidence="5">
    <location>
        <begin position="118"/>
        <end position="120"/>
    </location>
</feature>
<feature type="helix" evidence="5">
    <location>
        <begin position="121"/>
        <end position="134"/>
    </location>
</feature>
<feature type="strand" evidence="5">
    <location>
        <begin position="138"/>
        <end position="142"/>
    </location>
</feature>
<feature type="helix" evidence="5">
    <location>
        <begin position="144"/>
        <end position="150"/>
    </location>
</feature>
<feature type="helix" evidence="5">
    <location>
        <begin position="156"/>
        <end position="171"/>
    </location>
</feature>
<feature type="turn" evidence="5">
    <location>
        <begin position="172"/>
        <end position="174"/>
    </location>
</feature>
<feature type="helix" evidence="5">
    <location>
        <begin position="177"/>
        <end position="179"/>
    </location>
</feature>
<feature type="strand" evidence="5">
    <location>
        <begin position="180"/>
        <end position="184"/>
    </location>
</feature>
<feature type="helix" evidence="5">
    <location>
        <begin position="185"/>
        <end position="188"/>
    </location>
</feature>
<feature type="helix" evidence="5">
    <location>
        <begin position="191"/>
        <end position="201"/>
    </location>
</feature>
<feature type="helix" evidence="5">
    <location>
        <begin position="206"/>
        <end position="211"/>
    </location>
</feature>
<feature type="helix" evidence="5">
    <location>
        <begin position="221"/>
        <end position="225"/>
    </location>
</feature>
<feature type="helix" evidence="5">
    <location>
        <begin position="227"/>
        <end position="232"/>
    </location>
</feature>
<feature type="helix" evidence="5">
    <location>
        <begin position="236"/>
        <end position="238"/>
    </location>
</feature>
<feature type="turn" evidence="5">
    <location>
        <begin position="240"/>
        <end position="243"/>
    </location>
</feature>
<feature type="strand" evidence="5">
    <location>
        <begin position="251"/>
        <end position="256"/>
    </location>
</feature>
<feature type="helix" evidence="5">
    <location>
        <begin position="257"/>
        <end position="259"/>
    </location>
</feature>
<feature type="helix" evidence="5">
    <location>
        <begin position="260"/>
        <end position="273"/>
    </location>
</feature>
<feature type="strand" evidence="5">
    <location>
        <begin position="279"/>
        <end position="283"/>
    </location>
</feature>
<feature type="strand" evidence="7">
    <location>
        <begin position="291"/>
        <end position="295"/>
    </location>
</feature>
<feature type="helix" evidence="5">
    <location>
        <begin position="301"/>
        <end position="303"/>
    </location>
</feature>
<feature type="helix" evidence="5">
    <location>
        <begin position="311"/>
        <end position="321"/>
    </location>
</feature>
<feature type="helix" evidence="5">
    <location>
        <begin position="330"/>
        <end position="336"/>
    </location>
</feature>
<feature type="turn" evidence="5">
    <location>
        <begin position="340"/>
        <end position="342"/>
    </location>
</feature>
<feature type="helix" evidence="5">
    <location>
        <begin position="344"/>
        <end position="352"/>
    </location>
</feature>
<feature type="helix" evidence="5">
    <location>
        <begin position="356"/>
        <end position="367"/>
    </location>
</feature>
<feature type="helix" evidence="5">
    <location>
        <begin position="373"/>
        <end position="396"/>
    </location>
</feature>
<feature type="helix" evidence="5">
    <location>
        <begin position="400"/>
        <end position="407"/>
    </location>
</feature>
<dbReference type="EC" id="6.1.1.2" evidence="2"/>
<dbReference type="EMBL" id="Z48149">
    <property type="protein sequence ID" value="CAA88164.1"/>
    <property type="molecule type" value="Genomic_DNA"/>
</dbReference>
<dbReference type="EMBL" id="Z74839">
    <property type="protein sequence ID" value="CAA99110.1"/>
    <property type="molecule type" value="Genomic_DNA"/>
</dbReference>
<dbReference type="EMBL" id="AY692948">
    <property type="protein sequence ID" value="AAT92967.1"/>
    <property type="molecule type" value="Genomic_DNA"/>
</dbReference>
<dbReference type="EMBL" id="BK006948">
    <property type="protein sequence ID" value="DAA10687.1"/>
    <property type="molecule type" value="Genomic_DNA"/>
</dbReference>
<dbReference type="PIR" id="S51901">
    <property type="entry name" value="S51901"/>
</dbReference>
<dbReference type="RefSeq" id="NP_014544.1">
    <property type="nucleotide sequence ID" value="NM_001183351.1"/>
</dbReference>
<dbReference type="PDB" id="2IP1">
    <property type="method" value="X-ray"/>
    <property type="resolution" value="1.80 A"/>
    <property type="chains" value="A=1-432"/>
</dbReference>
<dbReference type="PDB" id="3KT0">
    <property type="method" value="X-ray"/>
    <property type="resolution" value="2.10 A"/>
    <property type="chains" value="A=1-432"/>
</dbReference>
<dbReference type="PDB" id="3KT3">
    <property type="method" value="X-ray"/>
    <property type="resolution" value="2.60 A"/>
    <property type="chains" value="A/B/C/D=1-432"/>
</dbReference>
<dbReference type="PDB" id="3KT6">
    <property type="method" value="X-ray"/>
    <property type="resolution" value="2.80 A"/>
    <property type="chains" value="A/B/C/D=1-432"/>
</dbReference>
<dbReference type="PDB" id="3KT8">
    <property type="method" value="X-ray"/>
    <property type="resolution" value="3.00 A"/>
    <property type="chains" value="A/B/C/D=1-432"/>
</dbReference>
<dbReference type="PDBsum" id="2IP1"/>
<dbReference type="PDBsum" id="3KT0"/>
<dbReference type="PDBsum" id="3KT3"/>
<dbReference type="PDBsum" id="3KT6"/>
<dbReference type="PDBsum" id="3KT8"/>
<dbReference type="SMR" id="Q12109"/>
<dbReference type="BioGRID" id="34305">
    <property type="interactions" value="251"/>
</dbReference>
<dbReference type="DIP" id="DIP-6750N"/>
<dbReference type="FunCoup" id="Q12109">
    <property type="interactions" value="1281"/>
</dbReference>
<dbReference type="IntAct" id="Q12109">
    <property type="interactions" value="4"/>
</dbReference>
<dbReference type="MINT" id="Q12109"/>
<dbReference type="STRING" id="4932.YOL097C"/>
<dbReference type="iPTMnet" id="Q12109"/>
<dbReference type="PaxDb" id="4932-YOL097C"/>
<dbReference type="PeptideAtlas" id="Q12109"/>
<dbReference type="EnsemblFungi" id="YOL097C_mRNA">
    <property type="protein sequence ID" value="YOL097C"/>
    <property type="gene ID" value="YOL097C"/>
</dbReference>
<dbReference type="GeneID" id="854056"/>
<dbReference type="KEGG" id="sce:YOL097C"/>
<dbReference type="AGR" id="SGD:S000005457"/>
<dbReference type="SGD" id="S000005457">
    <property type="gene designation" value="WRS1"/>
</dbReference>
<dbReference type="VEuPathDB" id="FungiDB:YOL097C"/>
<dbReference type="eggNOG" id="KOG2145">
    <property type="taxonomic scope" value="Eukaryota"/>
</dbReference>
<dbReference type="GeneTree" id="ENSGT00940000153724"/>
<dbReference type="HOGENOM" id="CLU_032621_0_1_1"/>
<dbReference type="InParanoid" id="Q12109"/>
<dbReference type="OMA" id="SIYHRFM"/>
<dbReference type="OrthoDB" id="10261385at2759"/>
<dbReference type="BioCyc" id="YEAST:G3O-33496-MONOMER"/>
<dbReference type="BioGRID-ORCS" id="854056">
    <property type="hits" value="9 hits in 10 CRISPR screens"/>
</dbReference>
<dbReference type="EvolutionaryTrace" id="Q12109"/>
<dbReference type="PRO" id="PR:Q12109"/>
<dbReference type="Proteomes" id="UP000002311">
    <property type="component" value="Chromosome XV"/>
</dbReference>
<dbReference type="RNAct" id="Q12109">
    <property type="molecule type" value="protein"/>
</dbReference>
<dbReference type="GO" id="GO:0005737">
    <property type="term" value="C:cytoplasm"/>
    <property type="evidence" value="ECO:0007005"/>
    <property type="project" value="SGD"/>
</dbReference>
<dbReference type="GO" id="GO:0005524">
    <property type="term" value="F:ATP binding"/>
    <property type="evidence" value="ECO:0007669"/>
    <property type="project" value="UniProtKB-KW"/>
</dbReference>
<dbReference type="GO" id="GO:1990825">
    <property type="term" value="F:sequence-specific mRNA binding"/>
    <property type="evidence" value="ECO:0000314"/>
    <property type="project" value="SGD"/>
</dbReference>
<dbReference type="GO" id="GO:0004830">
    <property type="term" value="F:tryptophan-tRNA ligase activity"/>
    <property type="evidence" value="ECO:0000314"/>
    <property type="project" value="SGD"/>
</dbReference>
<dbReference type="GO" id="GO:0006436">
    <property type="term" value="P:tryptophanyl-tRNA aminoacylation"/>
    <property type="evidence" value="ECO:0000318"/>
    <property type="project" value="GO_Central"/>
</dbReference>
<dbReference type="CDD" id="cd00806">
    <property type="entry name" value="TrpRS_core"/>
    <property type="match status" value="1"/>
</dbReference>
<dbReference type="FunFam" id="1.10.240.10:FF:000003">
    <property type="entry name" value="Tryptophan--tRNA ligase, cytoplasmic"/>
    <property type="match status" value="1"/>
</dbReference>
<dbReference type="FunFam" id="3.40.50.620:FF:000033">
    <property type="entry name" value="tryptophan--tRNA ligase, cytoplasmic"/>
    <property type="match status" value="1"/>
</dbReference>
<dbReference type="Gene3D" id="3.40.50.620">
    <property type="entry name" value="HUPs"/>
    <property type="match status" value="1"/>
</dbReference>
<dbReference type="Gene3D" id="1.10.240.10">
    <property type="entry name" value="Tyrosyl-Transfer RNA Synthetase"/>
    <property type="match status" value="1"/>
</dbReference>
<dbReference type="InterPro" id="IPR001412">
    <property type="entry name" value="aa-tRNA-synth_I_CS"/>
</dbReference>
<dbReference type="InterPro" id="IPR002305">
    <property type="entry name" value="aa-tRNA-synth_Ic"/>
</dbReference>
<dbReference type="InterPro" id="IPR014729">
    <property type="entry name" value="Rossmann-like_a/b/a_fold"/>
</dbReference>
<dbReference type="InterPro" id="IPR002306">
    <property type="entry name" value="Trp-tRNA-ligase"/>
</dbReference>
<dbReference type="NCBIfam" id="TIGR00233">
    <property type="entry name" value="trpS"/>
    <property type="match status" value="1"/>
</dbReference>
<dbReference type="PANTHER" id="PTHR10055:SF1">
    <property type="entry name" value="TRYPTOPHAN--TRNA LIGASE, CYTOPLASMIC"/>
    <property type="match status" value="1"/>
</dbReference>
<dbReference type="PANTHER" id="PTHR10055">
    <property type="entry name" value="TRYPTOPHANYL-TRNA SYNTHETASE"/>
    <property type="match status" value="1"/>
</dbReference>
<dbReference type="Pfam" id="PF00579">
    <property type="entry name" value="tRNA-synt_1b"/>
    <property type="match status" value="1"/>
</dbReference>
<dbReference type="PRINTS" id="PR01039">
    <property type="entry name" value="TRNASYNTHTRP"/>
</dbReference>
<dbReference type="SUPFAM" id="SSF52374">
    <property type="entry name" value="Nucleotidylyl transferase"/>
    <property type="match status" value="1"/>
</dbReference>
<dbReference type="PROSITE" id="PS00178">
    <property type="entry name" value="AA_TRNA_LIGASE_I"/>
    <property type="match status" value="1"/>
</dbReference>